<proteinExistence type="evidence at protein level"/>
<dbReference type="EC" id="2.3.1.255" evidence="2"/>
<dbReference type="EMBL" id="AK014469">
    <property type="protein sequence ID" value="BAB29373.1"/>
    <property type="molecule type" value="mRNA"/>
</dbReference>
<dbReference type="EMBL" id="AF133093">
    <property type="status" value="NOT_ANNOTATED_CDS"/>
    <property type="molecule type" value="Genomic_DNA"/>
</dbReference>
<dbReference type="CCDS" id="CCDS30217.1"/>
<dbReference type="RefSeq" id="NP_063923.1">
    <property type="nucleotide sequence ID" value="NM_019870.3"/>
</dbReference>
<dbReference type="SMR" id="Q9QY36"/>
<dbReference type="BioGRID" id="207880">
    <property type="interactions" value="41"/>
</dbReference>
<dbReference type="FunCoup" id="Q9QY36">
    <property type="interactions" value="2734"/>
</dbReference>
<dbReference type="IntAct" id="Q9QY36">
    <property type="interactions" value="37"/>
</dbReference>
<dbReference type="STRING" id="10090.ENSMUSP00000033763"/>
<dbReference type="iPTMnet" id="Q9QY36"/>
<dbReference type="PhosphoSitePlus" id="Q9QY36"/>
<dbReference type="jPOST" id="Q9QY36"/>
<dbReference type="PaxDb" id="10090-ENSMUSP00000033763"/>
<dbReference type="ProteomicsDB" id="286135"/>
<dbReference type="Pumba" id="Q9QY36"/>
<dbReference type="Antibodypedia" id="31057">
    <property type="antibodies" value="182 antibodies from 29 providers"/>
</dbReference>
<dbReference type="DNASU" id="56292"/>
<dbReference type="Ensembl" id="ENSMUST00000033763.15">
    <property type="protein sequence ID" value="ENSMUSP00000033763.9"/>
    <property type="gene ID" value="ENSMUSG00000031388.15"/>
</dbReference>
<dbReference type="GeneID" id="56292"/>
<dbReference type="KEGG" id="mmu:56292"/>
<dbReference type="UCSC" id="uc009tng.2">
    <property type="organism name" value="mouse"/>
</dbReference>
<dbReference type="AGR" id="MGI:1915255"/>
<dbReference type="CTD" id="8260"/>
<dbReference type="MGI" id="MGI:1915255">
    <property type="gene designation" value="Naa10"/>
</dbReference>
<dbReference type="VEuPathDB" id="HostDB:ENSMUSG00000031388"/>
<dbReference type="eggNOG" id="KOG3235">
    <property type="taxonomic scope" value="Eukaryota"/>
</dbReference>
<dbReference type="GeneTree" id="ENSGT00550000074803"/>
<dbReference type="InParanoid" id="Q9QY36"/>
<dbReference type="OrthoDB" id="25586at2759"/>
<dbReference type="PhylomeDB" id="Q9QY36"/>
<dbReference type="TreeFam" id="TF300078"/>
<dbReference type="BRENDA" id="2.3.1.255">
    <property type="organism ID" value="3474"/>
</dbReference>
<dbReference type="BioGRID-ORCS" id="56292">
    <property type="hits" value="12 hits in 81 CRISPR screens"/>
</dbReference>
<dbReference type="ChiTaRS" id="Naa10">
    <property type="organism name" value="mouse"/>
</dbReference>
<dbReference type="PRO" id="PR:Q9QY36"/>
<dbReference type="Proteomes" id="UP000000589">
    <property type="component" value="Chromosome X"/>
</dbReference>
<dbReference type="RNAct" id="Q9QY36">
    <property type="molecule type" value="protein"/>
</dbReference>
<dbReference type="Bgee" id="ENSMUSG00000031388">
    <property type="expression patterns" value="Expressed in epiblast (generic) and 128 other cell types or tissues"/>
</dbReference>
<dbReference type="ExpressionAtlas" id="Q9QY36">
    <property type="expression patterns" value="baseline and differential"/>
</dbReference>
<dbReference type="GO" id="GO:0005737">
    <property type="term" value="C:cytoplasm"/>
    <property type="evidence" value="ECO:0000314"/>
    <property type="project" value="MGI"/>
</dbReference>
<dbReference type="GO" id="GO:0005829">
    <property type="term" value="C:cytosol"/>
    <property type="evidence" value="ECO:0007669"/>
    <property type="project" value="Ensembl"/>
</dbReference>
<dbReference type="GO" id="GO:0031415">
    <property type="term" value="C:NatA complex"/>
    <property type="evidence" value="ECO:0007669"/>
    <property type="project" value="Ensembl"/>
</dbReference>
<dbReference type="GO" id="GO:0005730">
    <property type="term" value="C:nucleolus"/>
    <property type="evidence" value="ECO:0007669"/>
    <property type="project" value="Ensembl"/>
</dbReference>
<dbReference type="GO" id="GO:0005634">
    <property type="term" value="C:nucleus"/>
    <property type="evidence" value="ECO:0000250"/>
    <property type="project" value="UniProtKB"/>
</dbReference>
<dbReference type="GO" id="GO:0008080">
    <property type="term" value="F:N-acetyltransferase activity"/>
    <property type="evidence" value="ECO:0000314"/>
    <property type="project" value="MGI"/>
</dbReference>
<dbReference type="GO" id="GO:1990189">
    <property type="term" value="F:protein N-terminal-serine acetyltransferase activity"/>
    <property type="evidence" value="ECO:0007669"/>
    <property type="project" value="RHEA"/>
</dbReference>
<dbReference type="GO" id="GO:0004596">
    <property type="term" value="F:protein-N-terminal amino-acid acetyltransferase activity"/>
    <property type="evidence" value="ECO:0000250"/>
    <property type="project" value="UniProtKB"/>
</dbReference>
<dbReference type="GO" id="GO:0008999">
    <property type="term" value="F:protein-N-terminal-alanine acetyltransferase activity"/>
    <property type="evidence" value="ECO:0007669"/>
    <property type="project" value="RHEA"/>
</dbReference>
<dbReference type="GO" id="GO:0043022">
    <property type="term" value="F:ribosome binding"/>
    <property type="evidence" value="ECO:0007669"/>
    <property type="project" value="Ensembl"/>
</dbReference>
<dbReference type="GO" id="GO:0006474">
    <property type="term" value="P:N-terminal protein amino acid acetylation"/>
    <property type="evidence" value="ECO:0000250"/>
    <property type="project" value="UniProtKB"/>
</dbReference>
<dbReference type="GO" id="GO:2000719">
    <property type="term" value="P:negative regulation of maintenance of mitotic sister chromatid cohesion, centromeric"/>
    <property type="evidence" value="ECO:0000250"/>
    <property type="project" value="UniProtKB"/>
</dbReference>
<dbReference type="CDD" id="cd04301">
    <property type="entry name" value="NAT_SF"/>
    <property type="match status" value="1"/>
</dbReference>
<dbReference type="FunFam" id="3.40.630.30:FF:000014">
    <property type="entry name" value="N-alpha-acetyltransferase 10 isoform X1"/>
    <property type="match status" value="1"/>
</dbReference>
<dbReference type="Gene3D" id="3.40.630.30">
    <property type="match status" value="1"/>
</dbReference>
<dbReference type="InterPro" id="IPR016181">
    <property type="entry name" value="Acyl_CoA_acyltransferase"/>
</dbReference>
<dbReference type="InterPro" id="IPR045047">
    <property type="entry name" value="Ard1-like"/>
</dbReference>
<dbReference type="InterPro" id="IPR000182">
    <property type="entry name" value="GNAT_dom"/>
</dbReference>
<dbReference type="PANTHER" id="PTHR23091:SF268">
    <property type="entry name" value="N-ALPHA-ACETYLTRANSFERASE 10"/>
    <property type="match status" value="1"/>
</dbReference>
<dbReference type="PANTHER" id="PTHR23091">
    <property type="entry name" value="N-TERMINAL ACETYLTRANSFERASE"/>
    <property type="match status" value="1"/>
</dbReference>
<dbReference type="Pfam" id="PF00583">
    <property type="entry name" value="Acetyltransf_1"/>
    <property type="match status" value="1"/>
</dbReference>
<dbReference type="SUPFAM" id="SSF55729">
    <property type="entry name" value="Acyl-CoA N-acyltransferases (Nat)"/>
    <property type="match status" value="1"/>
</dbReference>
<dbReference type="PROSITE" id="PS51186">
    <property type="entry name" value="GNAT"/>
    <property type="match status" value="1"/>
</dbReference>
<accession>Q9QY36</accession>
<gene>
    <name type="primary">Naa10</name>
    <name type="synonym">Ard1</name>
    <name type="synonym">Ard1a</name>
    <name type="synonym">Te2</name>
</gene>
<organism>
    <name type="scientific">Mus musculus</name>
    <name type="common">Mouse</name>
    <dbReference type="NCBI Taxonomy" id="10090"/>
    <lineage>
        <taxon>Eukaryota</taxon>
        <taxon>Metazoa</taxon>
        <taxon>Chordata</taxon>
        <taxon>Craniata</taxon>
        <taxon>Vertebrata</taxon>
        <taxon>Euteleostomi</taxon>
        <taxon>Mammalia</taxon>
        <taxon>Eutheria</taxon>
        <taxon>Euarchontoglires</taxon>
        <taxon>Glires</taxon>
        <taxon>Rodentia</taxon>
        <taxon>Myomorpha</taxon>
        <taxon>Muroidea</taxon>
        <taxon>Muridae</taxon>
        <taxon>Murinae</taxon>
        <taxon>Mus</taxon>
        <taxon>Mus</taxon>
    </lineage>
</organism>
<sequence>MNIRNARPEDLMNMQHCNLLCLPENYQMKYYFYHGLSWPQLSYIAEDENGKIVGYVLAKMEEDPDDVPHGHITSLAVKRSHRRLGLAQKLMDQASRAMIENFNAKYVSLHVRKSNRAALHLYSNTLNFQISEVEPKYYADGEDAYAMKRDLTQMADELRRHLELKEKGKHMVLAALENKAENKGNVLLSSGEACREEKGLAAEDSGGDSKDLSEVSETTESTDVKDSSEASDSAS</sequence>
<comment type="function">
    <text evidence="2 5 6">Catalytic subunit of the N-terminal acetyltransferase A (NatA) complex which displays alpha (N-terminal) acetyltransferase activity (PubMed:12888564). Acetylates amino termini that are devoid of initiator methionine (By similarity). The alpha (N-terminal) acetyltransferase activity may be important for vascular, hematopoietic and neuronal growth and development (By similarity). Without NAA15, displays epsilon (internal) acetyltransferase activity towards HIF1A, thereby promoting its degradation (PubMed:12464182). Represses MYLK kinase activity by acetylation, and thus represses tumor cell migration (By similarity). Acetylates, and stabilizes TSC2, thereby repressing mTOR activity and suppressing cancer development (By similarity). Acetylates HSPA1A and HSPA1B at 'Lys-77' which enhances its chaperone activity and leads to preferential binding to co-chaperone HOPX (By similarity). Acetylates HIST1H4A (By similarity). Acts as a negative regulator of sister chromatid cohesion during mitosis (By similarity).</text>
</comment>
<comment type="catalytic activity">
    <reaction evidence="2">
        <text>N-terminal glycyl-[protein] + acetyl-CoA = N-terminal N(alpha)-acetylglycyl-[protein] + CoA + H(+)</text>
        <dbReference type="Rhea" id="RHEA:50496"/>
        <dbReference type="Rhea" id="RHEA-COMP:12666"/>
        <dbReference type="Rhea" id="RHEA-COMP:12700"/>
        <dbReference type="ChEBI" id="CHEBI:15378"/>
        <dbReference type="ChEBI" id="CHEBI:57287"/>
        <dbReference type="ChEBI" id="CHEBI:57288"/>
        <dbReference type="ChEBI" id="CHEBI:64723"/>
        <dbReference type="ChEBI" id="CHEBI:133369"/>
        <dbReference type="EC" id="2.3.1.255"/>
    </reaction>
</comment>
<comment type="catalytic activity">
    <reaction evidence="2">
        <text>N-terminal L-alanyl-[protein] + acetyl-CoA = N-terminal N(alpha)-acetyl-L-alanyl-[protein] + CoA + H(+)</text>
        <dbReference type="Rhea" id="RHEA:50500"/>
        <dbReference type="Rhea" id="RHEA-COMP:12701"/>
        <dbReference type="Rhea" id="RHEA-COMP:12702"/>
        <dbReference type="ChEBI" id="CHEBI:15378"/>
        <dbReference type="ChEBI" id="CHEBI:57287"/>
        <dbReference type="ChEBI" id="CHEBI:57288"/>
        <dbReference type="ChEBI" id="CHEBI:64718"/>
        <dbReference type="ChEBI" id="CHEBI:83683"/>
        <dbReference type="EC" id="2.3.1.255"/>
    </reaction>
</comment>
<comment type="catalytic activity">
    <reaction evidence="2">
        <text>N-terminal L-seryl-[protein] + acetyl-CoA = N-terminal N(alpha)-acetyl-L-seryl-[protein] + CoA + H(+)</text>
        <dbReference type="Rhea" id="RHEA:50504"/>
        <dbReference type="Rhea" id="RHEA-COMP:12703"/>
        <dbReference type="Rhea" id="RHEA-COMP:12704"/>
        <dbReference type="ChEBI" id="CHEBI:15378"/>
        <dbReference type="ChEBI" id="CHEBI:57287"/>
        <dbReference type="ChEBI" id="CHEBI:57288"/>
        <dbReference type="ChEBI" id="CHEBI:64738"/>
        <dbReference type="ChEBI" id="CHEBI:83690"/>
        <dbReference type="EC" id="2.3.1.255"/>
    </reaction>
</comment>
<comment type="catalytic activity">
    <reaction evidence="2">
        <text>N-terminal L-valyl-[protein] + acetyl-CoA = N-terminal N(alpha)-acetyl-L-valyl-[protein] + CoA + H(+)</text>
        <dbReference type="Rhea" id="RHEA:50508"/>
        <dbReference type="Rhea" id="RHEA-COMP:12705"/>
        <dbReference type="Rhea" id="RHEA-COMP:12706"/>
        <dbReference type="ChEBI" id="CHEBI:15378"/>
        <dbReference type="ChEBI" id="CHEBI:57287"/>
        <dbReference type="ChEBI" id="CHEBI:57288"/>
        <dbReference type="ChEBI" id="CHEBI:64741"/>
        <dbReference type="ChEBI" id="CHEBI:133371"/>
        <dbReference type="EC" id="2.3.1.255"/>
    </reaction>
</comment>
<comment type="catalytic activity">
    <reaction evidence="2">
        <text>N-terminal L-cysteinyl-[protein] + acetyl-CoA = N-terminal N(alpha)-acetyl-L-cysteinyl-[protein] + CoA + H(+)</text>
        <dbReference type="Rhea" id="RHEA:50512"/>
        <dbReference type="Rhea" id="RHEA-COMP:12707"/>
        <dbReference type="Rhea" id="RHEA-COMP:12708"/>
        <dbReference type="ChEBI" id="CHEBI:15378"/>
        <dbReference type="ChEBI" id="CHEBI:57287"/>
        <dbReference type="ChEBI" id="CHEBI:57288"/>
        <dbReference type="ChEBI" id="CHEBI:65250"/>
        <dbReference type="ChEBI" id="CHEBI:133372"/>
        <dbReference type="EC" id="2.3.1.255"/>
    </reaction>
</comment>
<comment type="catalytic activity">
    <reaction evidence="2">
        <text>N-terminal L-threonyl-[protein] + acetyl-CoA = N-terminal N(alpha)-acetyl-L-threonyl-[protein] + CoA + H(+)</text>
        <dbReference type="Rhea" id="RHEA:50516"/>
        <dbReference type="Rhea" id="RHEA-COMP:12709"/>
        <dbReference type="Rhea" id="RHEA-COMP:12710"/>
        <dbReference type="ChEBI" id="CHEBI:15378"/>
        <dbReference type="ChEBI" id="CHEBI:57287"/>
        <dbReference type="ChEBI" id="CHEBI:57288"/>
        <dbReference type="ChEBI" id="CHEBI:64739"/>
        <dbReference type="ChEBI" id="CHEBI:133375"/>
        <dbReference type="EC" id="2.3.1.255"/>
    </reaction>
</comment>
<comment type="subunit">
    <text evidence="2 5 6">Component of the N-terminal acetyltransferase A complex (also called the NatA complex) composed of NAA10 and NAA15 (By similarity). Interacts with NAA15 (PubMed:12888564). Component of the N-terminal acetyltransferase A (NatA)/HYPK complex at least composed of NAA10, NAA15 and HYPK, which has N-terminal acetyltransferase activity (By similarity). In complex with NAA15, interacts with HYPK (By similarity). Component of the N-terminal acetyltransferase E (NatE) complex at least composed of NAA10, NAA15 and NAA50 (By similarity). Within the complex interacts with NAA15; the interaction is required for binding to NAAT50 (By similarity). Interacts with NAAT50 (By similarity). The interaction of the NatA complex with NAA50 reduces the acetylation activity of the NatA complex (By similarity). Component of the N-terminal acetyltransferase E (NatE)/HYPK complex at least composed of NAA10, NAA15, NAA50 and HYPK (By similarity). In complex with NAA15, interacts with HYPK; the interaction with HYPK reduces the capacity of the NatA complex to interact with NAA50 (By similarity). Interacts with HIF1A (via its ODD domain); the interaction increases HIF1A protein stability during normoxia, an down-regulates it when induced by hypoxia (PubMed:12464182). Interacts with the ribosome (By similarity). Binds to MYLK (By similarity). Interacts with NAA16 (By similarity). Interacts (via its C-terminal domain) with TSC2, leading to its acetylation (By similarity). Interacts with IKBKB (By similarity). Interacts with HSPA1A and HSPA1B leading to its acetylation (By similarity).</text>
</comment>
<comment type="subcellular location">
    <subcellularLocation>
        <location evidence="6">Cytoplasm</location>
    </subcellularLocation>
    <subcellularLocation>
        <location evidence="2">Nucleus</location>
    </subcellularLocation>
    <text evidence="2">Also present in the free cytosolic and cytoskeleton-bound polysomes.</text>
</comment>
<comment type="tissue specificity">
    <text evidence="6">Ubiquitous.</text>
</comment>
<comment type="developmental stage">
    <text evidence="6">Expressed throughout the developing brain from 11.5 dpc through 17 dpc, continues to be expressed at P0, but then is down-regulated.</text>
</comment>
<comment type="PTM">
    <text evidence="2">Cleaved by caspases during apoptosis.</text>
</comment>
<comment type="PTM">
    <text>Phosphorylation by IKBKB/IKKB at Ser-209 destabilises NAA10 and promotes its proteasome-mediated degradation.</text>
</comment>
<comment type="PTM">
    <text evidence="2">Autoacetylated at Lys-136 which stimulates its catalytic activity.</text>
</comment>
<comment type="similarity">
    <text evidence="7">Belongs to the acetyltransferase family. ARD1 subfamily.</text>
</comment>
<evidence type="ECO:0000250" key="1"/>
<evidence type="ECO:0000250" key="2">
    <source>
        <dbReference type="UniProtKB" id="P41227"/>
    </source>
</evidence>
<evidence type="ECO:0000255" key="3">
    <source>
        <dbReference type="PROSITE-ProRule" id="PRU00532"/>
    </source>
</evidence>
<evidence type="ECO:0000256" key="4">
    <source>
        <dbReference type="SAM" id="MobiDB-lite"/>
    </source>
</evidence>
<evidence type="ECO:0000269" key="5">
    <source>
    </source>
</evidence>
<evidence type="ECO:0000269" key="6">
    <source>
    </source>
</evidence>
<evidence type="ECO:0000305" key="7"/>
<name>NAA10_MOUSE</name>
<protein>
    <recommendedName>
        <fullName>N-alpha-acetyltransferase 10</fullName>
        <ecNumber evidence="2">2.3.1.255</ecNumber>
    </recommendedName>
    <alternativeName>
        <fullName>N-terminal acetyltransferase complex ARD1 subunit homolog A</fullName>
    </alternativeName>
    <alternativeName>
        <fullName>NatA catalytic subunit Naa10</fullName>
    </alternativeName>
</protein>
<reference key="1">
    <citation type="journal article" date="2002" name="Cell">
        <title>Regulation and destabilization of HIF-1alpha by ARD1-mediated acetylation.</title>
        <authorList>
            <person name="Jeong J.-W."/>
            <person name="Bae M.-K."/>
            <person name="Ahn M.-Y."/>
            <person name="Kim S.-H."/>
            <person name="Sohn T.-K."/>
            <person name="Bae M.-H."/>
            <person name="Yoo M.-A."/>
            <person name="Song E.-J."/>
            <person name="Lee K.-J."/>
            <person name="Kim K.-W."/>
        </authorList>
    </citation>
    <scope>NUCLEOTIDE SEQUENCE [MRNA]</scope>
    <scope>FUNCTION</scope>
    <scope>INTERACTION WITH HIF1A</scope>
    <source>
        <tissue>Embryo</tissue>
        <tissue>T-cell</tissue>
    </source>
</reference>
<reference key="2">
    <citation type="journal article" date="2003" name="J. Biol. Chem.">
        <title>An evolutionarily conserved N-terminal acetyltransferase complex associated with neuronal development.</title>
        <authorList>
            <person name="Sugiura N."/>
            <person name="Adams S.M."/>
            <person name="Corriveau R.A."/>
        </authorList>
    </citation>
    <scope>NUCLEOTIDE SEQUENCE [MRNA]</scope>
    <scope>FUNCTION</scope>
    <scope>INTERACTION WITH NAA15</scope>
    <scope>SUBCELLULAR LOCATION</scope>
    <scope>DEVELOPMENTAL STAGE</scope>
    <scope>TISSUE SPECIFICITY</scope>
    <source>
        <tissue>Brain</tissue>
    </source>
</reference>
<reference key="3">
    <citation type="submission" date="1999-03" db="EMBL/GenBank/DDBJ databases">
        <title>Comparative sequence analysis of the mouse L1cam locus and the corresponding region of human Xq28.</title>
        <authorList>
            <person name="Platzer M."/>
            <person name="Brenner V."/>
            <person name="Reichwald K."/>
            <person name="Wiehe T."/>
            <person name="Oksche A."/>
            <person name="Rosenthal A."/>
        </authorList>
    </citation>
    <scope>NUCLEOTIDE SEQUENCE [GENOMIC DNA]</scope>
</reference>
<reference key="4">
    <citation type="journal article" date="2005" name="Science">
        <title>The transcriptional landscape of the mammalian genome.</title>
        <authorList>
            <person name="Carninci P."/>
            <person name="Kasukawa T."/>
            <person name="Katayama S."/>
            <person name="Gough J."/>
            <person name="Frith M.C."/>
            <person name="Maeda N."/>
            <person name="Oyama R."/>
            <person name="Ravasi T."/>
            <person name="Lenhard B."/>
            <person name="Wells C."/>
            <person name="Kodzius R."/>
            <person name="Shimokawa K."/>
            <person name="Bajic V.B."/>
            <person name="Brenner S.E."/>
            <person name="Batalov S."/>
            <person name="Forrest A.R."/>
            <person name="Zavolan M."/>
            <person name="Davis M.J."/>
            <person name="Wilming L.G."/>
            <person name="Aidinis V."/>
            <person name="Allen J.E."/>
            <person name="Ambesi-Impiombato A."/>
            <person name="Apweiler R."/>
            <person name="Aturaliya R.N."/>
            <person name="Bailey T.L."/>
            <person name="Bansal M."/>
            <person name="Baxter L."/>
            <person name="Beisel K.W."/>
            <person name="Bersano T."/>
            <person name="Bono H."/>
            <person name="Chalk A.M."/>
            <person name="Chiu K.P."/>
            <person name="Choudhary V."/>
            <person name="Christoffels A."/>
            <person name="Clutterbuck D.R."/>
            <person name="Crowe M.L."/>
            <person name="Dalla E."/>
            <person name="Dalrymple B.P."/>
            <person name="de Bono B."/>
            <person name="Della Gatta G."/>
            <person name="di Bernardo D."/>
            <person name="Down T."/>
            <person name="Engstrom P."/>
            <person name="Fagiolini M."/>
            <person name="Faulkner G."/>
            <person name="Fletcher C.F."/>
            <person name="Fukushima T."/>
            <person name="Furuno M."/>
            <person name="Futaki S."/>
            <person name="Gariboldi M."/>
            <person name="Georgii-Hemming P."/>
            <person name="Gingeras T.R."/>
            <person name="Gojobori T."/>
            <person name="Green R.E."/>
            <person name="Gustincich S."/>
            <person name="Harbers M."/>
            <person name="Hayashi Y."/>
            <person name="Hensch T.K."/>
            <person name="Hirokawa N."/>
            <person name="Hill D."/>
            <person name="Huminiecki L."/>
            <person name="Iacono M."/>
            <person name="Ikeo K."/>
            <person name="Iwama A."/>
            <person name="Ishikawa T."/>
            <person name="Jakt M."/>
            <person name="Kanapin A."/>
            <person name="Katoh M."/>
            <person name="Kawasawa Y."/>
            <person name="Kelso J."/>
            <person name="Kitamura H."/>
            <person name="Kitano H."/>
            <person name="Kollias G."/>
            <person name="Krishnan S.P."/>
            <person name="Kruger A."/>
            <person name="Kummerfeld S.K."/>
            <person name="Kurochkin I.V."/>
            <person name="Lareau L.F."/>
            <person name="Lazarevic D."/>
            <person name="Lipovich L."/>
            <person name="Liu J."/>
            <person name="Liuni S."/>
            <person name="McWilliam S."/>
            <person name="Madan Babu M."/>
            <person name="Madera M."/>
            <person name="Marchionni L."/>
            <person name="Matsuda H."/>
            <person name="Matsuzawa S."/>
            <person name="Miki H."/>
            <person name="Mignone F."/>
            <person name="Miyake S."/>
            <person name="Morris K."/>
            <person name="Mottagui-Tabar S."/>
            <person name="Mulder N."/>
            <person name="Nakano N."/>
            <person name="Nakauchi H."/>
            <person name="Ng P."/>
            <person name="Nilsson R."/>
            <person name="Nishiguchi S."/>
            <person name="Nishikawa S."/>
            <person name="Nori F."/>
            <person name="Ohara O."/>
            <person name="Okazaki Y."/>
            <person name="Orlando V."/>
            <person name="Pang K.C."/>
            <person name="Pavan W.J."/>
            <person name="Pavesi G."/>
            <person name="Pesole G."/>
            <person name="Petrovsky N."/>
            <person name="Piazza S."/>
            <person name="Reed J."/>
            <person name="Reid J.F."/>
            <person name="Ring B.Z."/>
            <person name="Ringwald M."/>
            <person name="Rost B."/>
            <person name="Ruan Y."/>
            <person name="Salzberg S.L."/>
            <person name="Sandelin A."/>
            <person name="Schneider C."/>
            <person name="Schoenbach C."/>
            <person name="Sekiguchi K."/>
            <person name="Semple C.A."/>
            <person name="Seno S."/>
            <person name="Sessa L."/>
            <person name="Sheng Y."/>
            <person name="Shibata Y."/>
            <person name="Shimada H."/>
            <person name="Shimada K."/>
            <person name="Silva D."/>
            <person name="Sinclair B."/>
            <person name="Sperling S."/>
            <person name="Stupka E."/>
            <person name="Sugiura K."/>
            <person name="Sultana R."/>
            <person name="Takenaka Y."/>
            <person name="Taki K."/>
            <person name="Tammoja K."/>
            <person name="Tan S.L."/>
            <person name="Tang S."/>
            <person name="Taylor M.S."/>
            <person name="Tegner J."/>
            <person name="Teichmann S.A."/>
            <person name="Ueda H.R."/>
            <person name="van Nimwegen E."/>
            <person name="Verardo R."/>
            <person name="Wei C.L."/>
            <person name="Yagi K."/>
            <person name="Yamanishi H."/>
            <person name="Zabarovsky E."/>
            <person name="Zhu S."/>
            <person name="Zimmer A."/>
            <person name="Hide W."/>
            <person name="Bult C."/>
            <person name="Grimmond S.M."/>
            <person name="Teasdale R.D."/>
            <person name="Liu E.T."/>
            <person name="Brusic V."/>
            <person name="Quackenbush J."/>
            <person name="Wahlestedt C."/>
            <person name="Mattick J.S."/>
            <person name="Hume D.A."/>
            <person name="Kai C."/>
            <person name="Sasaki D."/>
            <person name="Tomaru Y."/>
            <person name="Fukuda S."/>
            <person name="Kanamori-Katayama M."/>
            <person name="Suzuki M."/>
            <person name="Aoki J."/>
            <person name="Arakawa T."/>
            <person name="Iida J."/>
            <person name="Imamura K."/>
            <person name="Itoh M."/>
            <person name="Kato T."/>
            <person name="Kawaji H."/>
            <person name="Kawagashira N."/>
            <person name="Kawashima T."/>
            <person name="Kojima M."/>
            <person name="Kondo S."/>
            <person name="Konno H."/>
            <person name="Nakano K."/>
            <person name="Ninomiya N."/>
            <person name="Nishio T."/>
            <person name="Okada M."/>
            <person name="Plessy C."/>
            <person name="Shibata K."/>
            <person name="Shiraki T."/>
            <person name="Suzuki S."/>
            <person name="Tagami M."/>
            <person name="Waki K."/>
            <person name="Watahiki A."/>
            <person name="Okamura-Oho Y."/>
            <person name="Suzuki H."/>
            <person name="Kawai J."/>
            <person name="Hayashizaki Y."/>
        </authorList>
    </citation>
    <scope>NUCLEOTIDE SEQUENCE [LARGE SCALE MRNA]</scope>
    <source>
        <strain>C57BL/6J</strain>
        <tissue>Embryonic liver</tissue>
    </source>
</reference>
<reference key="5">
    <citation type="journal article" date="2010" name="Cell">
        <title>A tissue-specific atlas of mouse protein phosphorylation and expression.</title>
        <authorList>
            <person name="Huttlin E.L."/>
            <person name="Jedrychowski M.P."/>
            <person name="Elias J.E."/>
            <person name="Goswami T."/>
            <person name="Rad R."/>
            <person name="Beausoleil S.A."/>
            <person name="Villen J."/>
            <person name="Haas W."/>
            <person name="Sowa M.E."/>
            <person name="Gygi S.P."/>
        </authorList>
    </citation>
    <scope>IDENTIFICATION BY MASS SPECTROMETRY [LARGE SCALE ANALYSIS]</scope>
    <source>
        <tissue>Brain</tissue>
        <tissue>Brown adipose tissue</tissue>
        <tissue>Heart</tissue>
        <tissue>Lung</tissue>
        <tissue>Pancreas</tissue>
        <tissue>Spleen</tissue>
        <tissue>Testis</tissue>
    </source>
</reference>
<feature type="chain" id="PRO_0000074533" description="N-alpha-acetyltransferase 10">
    <location>
        <begin position="1"/>
        <end position="235"/>
    </location>
</feature>
<feature type="domain" description="N-acetyltransferase" evidence="3">
    <location>
        <begin position="1"/>
        <end position="152"/>
    </location>
</feature>
<feature type="region of interest" description="Interaction with NAA15" evidence="1">
    <location>
        <begin position="1"/>
        <end position="58"/>
    </location>
</feature>
<feature type="region of interest" description="Disordered" evidence="4">
    <location>
        <begin position="196"/>
        <end position="235"/>
    </location>
</feature>
<feature type="compositionally biased region" description="Basic and acidic residues" evidence="4">
    <location>
        <begin position="196"/>
        <end position="213"/>
    </location>
</feature>
<feature type="modified residue" description="N-acetylmethionine" evidence="2">
    <location>
        <position position="1"/>
    </location>
</feature>
<feature type="modified residue" description="N6-acetyllysine; by autocatalysis" evidence="2">
    <location>
        <position position="136"/>
    </location>
</feature>
<feature type="modified residue" description="Phosphoserine" evidence="2">
    <location>
        <position position="205"/>
    </location>
</feature>
<feature type="modified residue" description="Phosphoserine; by IKKB" evidence="2">
    <location>
        <position position="209"/>
    </location>
</feature>
<feature type="modified residue" description="Phosphoserine" evidence="2">
    <location>
        <position position="213"/>
    </location>
</feature>
<feature type="modified residue" description="Phosphoserine" evidence="2">
    <location>
        <position position="216"/>
    </location>
</feature>
<keyword id="KW-0007">Acetylation</keyword>
<keyword id="KW-0012">Acyltransferase</keyword>
<keyword id="KW-0963">Cytoplasm</keyword>
<keyword id="KW-0539">Nucleus</keyword>
<keyword id="KW-0597">Phosphoprotein</keyword>
<keyword id="KW-1185">Reference proteome</keyword>
<keyword id="KW-0808">Transferase</keyword>